<organism>
    <name type="scientific">Shigella boydii serotype 4 (strain Sb227)</name>
    <dbReference type="NCBI Taxonomy" id="300268"/>
    <lineage>
        <taxon>Bacteria</taxon>
        <taxon>Pseudomonadati</taxon>
        <taxon>Pseudomonadota</taxon>
        <taxon>Gammaproteobacteria</taxon>
        <taxon>Enterobacterales</taxon>
        <taxon>Enterobacteriaceae</taxon>
        <taxon>Shigella</taxon>
    </lineage>
</organism>
<accession>P0C1Y8</accession>
<sequence>MRIAKIGVIALFLFMALGGIGGVMLAGYTFILRAG</sequence>
<proteinExistence type="inferred from homology"/>
<protein>
    <recommendedName>
        <fullName evidence="1">UPF0387 membrane protein YohO</fullName>
    </recommendedName>
</protein>
<feature type="chain" id="PRO_0000252201" description="UPF0387 membrane protein YohO">
    <location>
        <begin position="1"/>
        <end position="35"/>
    </location>
</feature>
<feature type="transmembrane region" description="Helical" evidence="1">
    <location>
        <begin position="6"/>
        <end position="26"/>
    </location>
</feature>
<evidence type="ECO:0000255" key="1">
    <source>
        <dbReference type="HAMAP-Rule" id="MF_01362"/>
    </source>
</evidence>
<gene>
    <name evidence="1" type="primary">yohO</name>
    <name type="ordered locus">SBO_1016.1</name>
</gene>
<comment type="subcellular location">
    <subcellularLocation>
        <location evidence="1">Cell inner membrane</location>
        <topology evidence="1">Single-pass membrane protein</topology>
    </subcellularLocation>
</comment>
<comment type="similarity">
    <text evidence="1">Belongs to the UPF0387 family.</text>
</comment>
<dbReference type="EMBL" id="CP000036">
    <property type="status" value="NOT_ANNOTATED_CDS"/>
    <property type="molecule type" value="Genomic_DNA"/>
</dbReference>
<dbReference type="RefSeq" id="WP_001216963.1">
    <property type="nucleotide sequence ID" value="NC_007613.1"/>
</dbReference>
<dbReference type="Proteomes" id="UP000007067">
    <property type="component" value="Chromosome"/>
</dbReference>
<dbReference type="GO" id="GO:0005886">
    <property type="term" value="C:plasma membrane"/>
    <property type="evidence" value="ECO:0007669"/>
    <property type="project" value="UniProtKB-SubCell"/>
</dbReference>
<dbReference type="HAMAP" id="MF_01362">
    <property type="entry name" value="UPF0387"/>
    <property type="match status" value="1"/>
</dbReference>
<dbReference type="InterPro" id="IPR020870">
    <property type="entry name" value="UPF0387_membrane"/>
</dbReference>
<dbReference type="NCBIfam" id="NF010225">
    <property type="entry name" value="PRK13681.1"/>
    <property type="match status" value="1"/>
</dbReference>
<name>YOHO_SHIBS</name>
<keyword id="KW-0997">Cell inner membrane</keyword>
<keyword id="KW-1003">Cell membrane</keyword>
<keyword id="KW-0472">Membrane</keyword>
<keyword id="KW-0812">Transmembrane</keyword>
<keyword id="KW-1133">Transmembrane helix</keyword>
<reference key="1">
    <citation type="journal article" date="2005" name="Nucleic Acids Res.">
        <title>Genome dynamics and diversity of Shigella species, the etiologic agents of bacillary dysentery.</title>
        <authorList>
            <person name="Yang F."/>
            <person name="Yang J."/>
            <person name="Zhang X."/>
            <person name="Chen L."/>
            <person name="Jiang Y."/>
            <person name="Yan Y."/>
            <person name="Tang X."/>
            <person name="Wang J."/>
            <person name="Xiong Z."/>
            <person name="Dong J."/>
            <person name="Xue Y."/>
            <person name="Zhu Y."/>
            <person name="Xu X."/>
            <person name="Sun L."/>
            <person name="Chen S."/>
            <person name="Nie H."/>
            <person name="Peng J."/>
            <person name="Xu J."/>
            <person name="Wang Y."/>
            <person name="Yuan Z."/>
            <person name="Wen Y."/>
            <person name="Yao Z."/>
            <person name="Shen Y."/>
            <person name="Qiang B."/>
            <person name="Hou Y."/>
            <person name="Yu J."/>
            <person name="Jin Q."/>
        </authorList>
    </citation>
    <scope>NUCLEOTIDE SEQUENCE [LARGE SCALE GENOMIC DNA]</scope>
    <source>
        <strain>Sb227</strain>
    </source>
</reference>